<organism>
    <name type="scientific">Bacillus cereus (strain B4264)</name>
    <dbReference type="NCBI Taxonomy" id="405532"/>
    <lineage>
        <taxon>Bacteria</taxon>
        <taxon>Bacillati</taxon>
        <taxon>Bacillota</taxon>
        <taxon>Bacilli</taxon>
        <taxon>Bacillales</taxon>
        <taxon>Bacillaceae</taxon>
        <taxon>Bacillus</taxon>
        <taxon>Bacillus cereus group</taxon>
    </lineage>
</organism>
<dbReference type="EMBL" id="CP001176">
    <property type="protein sequence ID" value="ACK61781.1"/>
    <property type="molecule type" value="Genomic_DNA"/>
</dbReference>
<dbReference type="RefSeq" id="WP_000372699.1">
    <property type="nucleotide sequence ID" value="NZ_VEHB01000024.1"/>
</dbReference>
<dbReference type="SMR" id="B7H4Q3"/>
<dbReference type="KEGG" id="bcb:BCB4264_A0294"/>
<dbReference type="HOGENOM" id="CLU_061534_1_1_9"/>
<dbReference type="Proteomes" id="UP000007096">
    <property type="component" value="Chromosome"/>
</dbReference>
<dbReference type="GO" id="GO:0005737">
    <property type="term" value="C:cytoplasm"/>
    <property type="evidence" value="ECO:0007669"/>
    <property type="project" value="UniProtKB-SubCell"/>
</dbReference>
<dbReference type="GO" id="GO:0003677">
    <property type="term" value="F:DNA binding"/>
    <property type="evidence" value="ECO:0007669"/>
    <property type="project" value="UniProtKB-UniRule"/>
</dbReference>
<dbReference type="GO" id="GO:0003700">
    <property type="term" value="F:DNA-binding transcription factor activity"/>
    <property type="evidence" value="ECO:0007669"/>
    <property type="project" value="UniProtKB-UniRule"/>
</dbReference>
<dbReference type="GO" id="GO:0045892">
    <property type="term" value="P:negative regulation of DNA-templated transcription"/>
    <property type="evidence" value="ECO:0007669"/>
    <property type="project" value="InterPro"/>
</dbReference>
<dbReference type="GO" id="GO:0051775">
    <property type="term" value="P:response to redox state"/>
    <property type="evidence" value="ECO:0007669"/>
    <property type="project" value="InterPro"/>
</dbReference>
<dbReference type="Gene3D" id="3.40.50.720">
    <property type="entry name" value="NAD(P)-binding Rossmann-like Domain"/>
    <property type="match status" value="1"/>
</dbReference>
<dbReference type="Gene3D" id="1.10.10.10">
    <property type="entry name" value="Winged helix-like DNA-binding domain superfamily/Winged helix DNA-binding domain"/>
    <property type="match status" value="1"/>
</dbReference>
<dbReference type="HAMAP" id="MF_01131">
    <property type="entry name" value="Rex"/>
    <property type="match status" value="1"/>
</dbReference>
<dbReference type="InterPro" id="IPR003781">
    <property type="entry name" value="CoA-bd"/>
</dbReference>
<dbReference type="InterPro" id="IPR036291">
    <property type="entry name" value="NAD(P)-bd_dom_sf"/>
</dbReference>
<dbReference type="InterPro" id="IPR009718">
    <property type="entry name" value="Rex_DNA-bd_C_dom"/>
</dbReference>
<dbReference type="InterPro" id="IPR022876">
    <property type="entry name" value="Tscrpt_rep_Rex"/>
</dbReference>
<dbReference type="InterPro" id="IPR036388">
    <property type="entry name" value="WH-like_DNA-bd_sf"/>
</dbReference>
<dbReference type="InterPro" id="IPR036390">
    <property type="entry name" value="WH_DNA-bd_sf"/>
</dbReference>
<dbReference type="NCBIfam" id="NF003989">
    <property type="entry name" value="PRK05472.1-3"/>
    <property type="match status" value="1"/>
</dbReference>
<dbReference type="NCBIfam" id="NF003991">
    <property type="entry name" value="PRK05472.1-5"/>
    <property type="match status" value="1"/>
</dbReference>
<dbReference type="NCBIfam" id="NF003994">
    <property type="entry name" value="PRK05472.2-3"/>
    <property type="match status" value="1"/>
</dbReference>
<dbReference type="NCBIfam" id="NF003995">
    <property type="entry name" value="PRK05472.2-4"/>
    <property type="match status" value="1"/>
</dbReference>
<dbReference type="NCBIfam" id="NF003996">
    <property type="entry name" value="PRK05472.2-5"/>
    <property type="match status" value="1"/>
</dbReference>
<dbReference type="PANTHER" id="PTHR35786">
    <property type="entry name" value="REDOX-SENSING TRANSCRIPTIONAL REPRESSOR REX"/>
    <property type="match status" value="1"/>
</dbReference>
<dbReference type="PANTHER" id="PTHR35786:SF1">
    <property type="entry name" value="REDOX-SENSING TRANSCRIPTIONAL REPRESSOR REX 1"/>
    <property type="match status" value="1"/>
</dbReference>
<dbReference type="Pfam" id="PF02629">
    <property type="entry name" value="CoA_binding"/>
    <property type="match status" value="1"/>
</dbReference>
<dbReference type="Pfam" id="PF06971">
    <property type="entry name" value="Put_DNA-bind_N"/>
    <property type="match status" value="1"/>
</dbReference>
<dbReference type="SMART" id="SM00881">
    <property type="entry name" value="CoA_binding"/>
    <property type="match status" value="1"/>
</dbReference>
<dbReference type="SUPFAM" id="SSF51735">
    <property type="entry name" value="NAD(P)-binding Rossmann-fold domains"/>
    <property type="match status" value="1"/>
</dbReference>
<dbReference type="SUPFAM" id="SSF46785">
    <property type="entry name" value="Winged helix' DNA-binding domain"/>
    <property type="match status" value="1"/>
</dbReference>
<reference key="1">
    <citation type="submission" date="2008-10" db="EMBL/GenBank/DDBJ databases">
        <title>Genome sequence of Bacillus cereus B4264.</title>
        <authorList>
            <person name="Dodson R.J."/>
            <person name="Durkin A.S."/>
            <person name="Rosovitz M.J."/>
            <person name="Rasko D.A."/>
            <person name="Hoffmaster A."/>
            <person name="Ravel J."/>
            <person name="Sutton G."/>
        </authorList>
    </citation>
    <scope>NUCLEOTIDE SEQUENCE [LARGE SCALE GENOMIC DNA]</scope>
    <source>
        <strain>B4264</strain>
    </source>
</reference>
<feature type="chain" id="PRO_1000137318" description="Redox-sensing transcriptional repressor Rex">
    <location>
        <begin position="1"/>
        <end position="209"/>
    </location>
</feature>
<feature type="DNA-binding region" description="H-T-H motif" evidence="1">
    <location>
        <begin position="16"/>
        <end position="55"/>
    </location>
</feature>
<feature type="binding site" evidence="1">
    <location>
        <begin position="90"/>
        <end position="95"/>
    </location>
    <ligand>
        <name>NAD(+)</name>
        <dbReference type="ChEBI" id="CHEBI:57540"/>
    </ligand>
</feature>
<evidence type="ECO:0000255" key="1">
    <source>
        <dbReference type="HAMAP-Rule" id="MF_01131"/>
    </source>
</evidence>
<proteinExistence type="inferred from homology"/>
<protein>
    <recommendedName>
        <fullName evidence="1">Redox-sensing transcriptional repressor Rex</fullName>
    </recommendedName>
</protein>
<name>REX_BACC4</name>
<accession>B7H4Q3</accession>
<sequence>MDQQKIPQATAKRLPLYYRFIQNLSLSGKQRVSSAELSEAVKVDSATIRRDFSYFGALGKKGYGYNVNYLLSFFRETLDQDDITRVALIGVGNLGTAFLHYNFTKNNNTKIEMAFDVSEEKVGTEIGGIPVYHLDELEERLSNDIQVAILTVPATVAQAVADRLAETSVHGILNFTPARLNVSENIRIHHIDLAVELQTLVYFLKNYPQ</sequence>
<gene>
    <name evidence="1" type="primary">rex</name>
    <name type="ordered locus">BCB4264_A0294</name>
</gene>
<comment type="function">
    <text evidence="1">Modulates transcription in response to changes in cellular NADH/NAD(+) redox state.</text>
</comment>
<comment type="subunit">
    <text evidence="1">Homodimer.</text>
</comment>
<comment type="subcellular location">
    <subcellularLocation>
        <location evidence="1">Cytoplasm</location>
    </subcellularLocation>
</comment>
<comment type="similarity">
    <text evidence="1">Belongs to the transcriptional regulatory Rex family.</text>
</comment>
<keyword id="KW-0963">Cytoplasm</keyword>
<keyword id="KW-0238">DNA-binding</keyword>
<keyword id="KW-0520">NAD</keyword>
<keyword id="KW-0678">Repressor</keyword>
<keyword id="KW-0804">Transcription</keyword>
<keyword id="KW-0805">Transcription regulation</keyword>